<name>CATA1_ARATH</name>
<gene>
    <name type="primary">CAT1</name>
    <name type="ordered locus">At1g20630</name>
    <name type="ORF">F2D10.11</name>
    <name type="ORF">F5M15.31</name>
</gene>
<dbReference type="EC" id="1.11.1.6"/>
<dbReference type="EMBL" id="U43340">
    <property type="protein sequence ID" value="AAB07026.1"/>
    <property type="molecule type" value="mRNA"/>
</dbReference>
<dbReference type="EMBL" id="AF021937">
    <property type="protein sequence ID" value="AAC17731.1"/>
    <property type="molecule type" value="Genomic_DNA"/>
</dbReference>
<dbReference type="EMBL" id="AC027665">
    <property type="protein sequence ID" value="AAF79625.1"/>
    <property type="status" value="ALT_SEQ"/>
    <property type="molecule type" value="Genomic_DNA"/>
</dbReference>
<dbReference type="EMBL" id="AC069251">
    <property type="protein sequence ID" value="AAF80611.1"/>
    <property type="status" value="ALT_SEQ"/>
    <property type="molecule type" value="Genomic_DNA"/>
</dbReference>
<dbReference type="EMBL" id="CP002684">
    <property type="protein sequence ID" value="AEE29998.1"/>
    <property type="molecule type" value="Genomic_DNA"/>
</dbReference>
<dbReference type="EMBL" id="AY136424">
    <property type="protein sequence ID" value="AAM97090.1"/>
    <property type="molecule type" value="mRNA"/>
</dbReference>
<dbReference type="EMBL" id="BT010373">
    <property type="protein sequence ID" value="AAQ56816.1"/>
    <property type="molecule type" value="mRNA"/>
</dbReference>
<dbReference type="RefSeq" id="NP_564121.1">
    <property type="nucleotide sequence ID" value="NM_101914.4"/>
</dbReference>
<dbReference type="SMR" id="Q96528"/>
<dbReference type="BioGRID" id="23891">
    <property type="interactions" value="9"/>
</dbReference>
<dbReference type="FunCoup" id="Q96528">
    <property type="interactions" value="1987"/>
</dbReference>
<dbReference type="IntAct" id="Q96528">
    <property type="interactions" value="4"/>
</dbReference>
<dbReference type="STRING" id="3702.Q96528"/>
<dbReference type="PeroxiBase" id="5142">
    <property type="entry name" value="AtKat01"/>
</dbReference>
<dbReference type="iPTMnet" id="Q96528"/>
<dbReference type="PaxDb" id="3702-AT1G20630.1"/>
<dbReference type="ProteomicsDB" id="223883"/>
<dbReference type="EnsemblPlants" id="AT1G20630.1">
    <property type="protein sequence ID" value="AT1G20630.1"/>
    <property type="gene ID" value="AT1G20630"/>
</dbReference>
<dbReference type="GeneID" id="838652"/>
<dbReference type="Gramene" id="AT1G20630.1">
    <property type="protein sequence ID" value="AT1G20630.1"/>
    <property type="gene ID" value="AT1G20630"/>
</dbReference>
<dbReference type="KEGG" id="ath:AT1G20630"/>
<dbReference type="Araport" id="AT1G20630"/>
<dbReference type="TAIR" id="AT1G20630">
    <property type="gene designation" value="CAT1"/>
</dbReference>
<dbReference type="eggNOG" id="KOG0047">
    <property type="taxonomic scope" value="Eukaryota"/>
</dbReference>
<dbReference type="HOGENOM" id="CLU_010645_4_0_1"/>
<dbReference type="InParanoid" id="Q96528"/>
<dbReference type="OMA" id="KFRWNVF"/>
<dbReference type="OrthoDB" id="6880011at2759"/>
<dbReference type="PhylomeDB" id="Q96528"/>
<dbReference type="CD-CODE" id="4299E36E">
    <property type="entry name" value="Nucleolus"/>
</dbReference>
<dbReference type="PRO" id="PR:Q96528"/>
<dbReference type="Proteomes" id="UP000006548">
    <property type="component" value="Chromosome 1"/>
</dbReference>
<dbReference type="ExpressionAtlas" id="Q96528">
    <property type="expression patterns" value="baseline and differential"/>
</dbReference>
<dbReference type="GO" id="GO:0009941">
    <property type="term" value="C:chloroplast envelope"/>
    <property type="evidence" value="ECO:0007005"/>
    <property type="project" value="TAIR"/>
</dbReference>
<dbReference type="GO" id="GO:0005829">
    <property type="term" value="C:cytosol"/>
    <property type="evidence" value="ECO:0007005"/>
    <property type="project" value="TAIR"/>
</dbReference>
<dbReference type="GO" id="GO:0022626">
    <property type="term" value="C:cytosolic ribosome"/>
    <property type="evidence" value="ECO:0007005"/>
    <property type="project" value="TAIR"/>
</dbReference>
<dbReference type="GO" id="GO:0005739">
    <property type="term" value="C:mitochondrion"/>
    <property type="evidence" value="ECO:0007005"/>
    <property type="project" value="TAIR"/>
</dbReference>
<dbReference type="GO" id="GO:0005634">
    <property type="term" value="C:nucleus"/>
    <property type="evidence" value="ECO:0007005"/>
    <property type="project" value="TAIR"/>
</dbReference>
<dbReference type="GO" id="GO:0005777">
    <property type="term" value="C:peroxisome"/>
    <property type="evidence" value="ECO:0007005"/>
    <property type="project" value="TAIR"/>
</dbReference>
<dbReference type="GO" id="GO:0009505">
    <property type="term" value="C:plant-type cell wall"/>
    <property type="evidence" value="ECO:0007005"/>
    <property type="project" value="TAIR"/>
</dbReference>
<dbReference type="GO" id="GO:0004096">
    <property type="term" value="F:catalase activity"/>
    <property type="evidence" value="ECO:0000250"/>
    <property type="project" value="TAIR"/>
</dbReference>
<dbReference type="GO" id="GO:0050897">
    <property type="term" value="F:cobalt ion binding"/>
    <property type="evidence" value="ECO:0007005"/>
    <property type="project" value="TAIR"/>
</dbReference>
<dbReference type="GO" id="GO:0020037">
    <property type="term" value="F:heme binding"/>
    <property type="evidence" value="ECO:0007669"/>
    <property type="project" value="InterPro"/>
</dbReference>
<dbReference type="GO" id="GO:0006995">
    <property type="term" value="P:cellular response to nitrogen starvation"/>
    <property type="evidence" value="ECO:0000270"/>
    <property type="project" value="TAIR"/>
</dbReference>
<dbReference type="GO" id="GO:0016036">
    <property type="term" value="P:cellular response to phosphate starvation"/>
    <property type="evidence" value="ECO:0000270"/>
    <property type="project" value="TAIR"/>
</dbReference>
<dbReference type="GO" id="GO:0009970">
    <property type="term" value="P:cellular response to sulfate starvation"/>
    <property type="evidence" value="ECO:0000270"/>
    <property type="project" value="TAIR"/>
</dbReference>
<dbReference type="GO" id="GO:0042744">
    <property type="term" value="P:hydrogen peroxide catabolic process"/>
    <property type="evidence" value="ECO:0000316"/>
    <property type="project" value="TAIR"/>
</dbReference>
<dbReference type="GO" id="GO:0009737">
    <property type="term" value="P:response to abscisic acid"/>
    <property type="evidence" value="ECO:0000270"/>
    <property type="project" value="TAIR"/>
</dbReference>
<dbReference type="GO" id="GO:0042542">
    <property type="term" value="P:response to hydrogen peroxide"/>
    <property type="evidence" value="ECO:0000270"/>
    <property type="project" value="TAIR"/>
</dbReference>
<dbReference type="GO" id="GO:0009416">
    <property type="term" value="P:response to light stimulus"/>
    <property type="evidence" value="ECO:0000270"/>
    <property type="project" value="TAIR"/>
</dbReference>
<dbReference type="CDD" id="cd08154">
    <property type="entry name" value="catalase_clade_1"/>
    <property type="match status" value="1"/>
</dbReference>
<dbReference type="FunFam" id="2.40.180.10:FF:000002">
    <property type="entry name" value="Catalase"/>
    <property type="match status" value="1"/>
</dbReference>
<dbReference type="Gene3D" id="2.40.180.10">
    <property type="entry name" value="Catalase core domain"/>
    <property type="match status" value="1"/>
</dbReference>
<dbReference type="InterPro" id="IPR018028">
    <property type="entry name" value="Catalase"/>
</dbReference>
<dbReference type="InterPro" id="IPR024708">
    <property type="entry name" value="Catalase_AS"/>
</dbReference>
<dbReference type="InterPro" id="IPR024711">
    <property type="entry name" value="Catalase_clade1/3"/>
</dbReference>
<dbReference type="InterPro" id="IPR011614">
    <property type="entry name" value="Catalase_core"/>
</dbReference>
<dbReference type="InterPro" id="IPR002226">
    <property type="entry name" value="Catalase_haem_BS"/>
</dbReference>
<dbReference type="InterPro" id="IPR010582">
    <property type="entry name" value="Catalase_immune_responsive"/>
</dbReference>
<dbReference type="InterPro" id="IPR020835">
    <property type="entry name" value="Catalase_sf"/>
</dbReference>
<dbReference type="PANTHER" id="PTHR11465">
    <property type="entry name" value="CATALASE"/>
    <property type="match status" value="1"/>
</dbReference>
<dbReference type="PANTHER" id="PTHR11465:SF39">
    <property type="entry name" value="CATALASE-1"/>
    <property type="match status" value="1"/>
</dbReference>
<dbReference type="Pfam" id="PF00199">
    <property type="entry name" value="Catalase"/>
    <property type="match status" value="1"/>
</dbReference>
<dbReference type="Pfam" id="PF06628">
    <property type="entry name" value="Catalase-rel"/>
    <property type="match status" value="1"/>
</dbReference>
<dbReference type="PIRSF" id="PIRSF038928">
    <property type="entry name" value="Catalase_clade1-3"/>
    <property type="match status" value="1"/>
</dbReference>
<dbReference type="PRINTS" id="PR00067">
    <property type="entry name" value="CATALASE"/>
</dbReference>
<dbReference type="SMART" id="SM01060">
    <property type="entry name" value="Catalase"/>
    <property type="match status" value="1"/>
</dbReference>
<dbReference type="SUPFAM" id="SSF56634">
    <property type="entry name" value="Heme-dependent catalase-like"/>
    <property type="match status" value="1"/>
</dbReference>
<dbReference type="PROSITE" id="PS00437">
    <property type="entry name" value="CATALASE_1"/>
    <property type="match status" value="1"/>
</dbReference>
<dbReference type="PROSITE" id="PS00438">
    <property type="entry name" value="CATALASE_2"/>
    <property type="match status" value="1"/>
</dbReference>
<dbReference type="PROSITE" id="PS51402">
    <property type="entry name" value="CATALASE_3"/>
    <property type="match status" value="1"/>
</dbReference>
<proteinExistence type="evidence at protein level"/>
<protein>
    <recommendedName>
        <fullName>Catalase-1</fullName>
        <ecNumber>1.11.1.6</ecNumber>
    </recommendedName>
</protein>
<comment type="function">
    <text>Occurs in almost all aerobically respiring organisms and serves to protect cells from the toxic effects of hydrogen peroxide.</text>
</comment>
<comment type="catalytic activity">
    <reaction evidence="2">
        <text>2 H2O2 = O2 + 2 H2O</text>
        <dbReference type="Rhea" id="RHEA:20309"/>
        <dbReference type="ChEBI" id="CHEBI:15377"/>
        <dbReference type="ChEBI" id="CHEBI:15379"/>
        <dbReference type="ChEBI" id="CHEBI:16240"/>
        <dbReference type="EC" id="1.11.1.6"/>
    </reaction>
</comment>
<comment type="cofactor">
    <cofactor>
        <name>heme</name>
        <dbReference type="ChEBI" id="CHEBI:30413"/>
    </cofactor>
</comment>
<comment type="subunit">
    <text evidence="5 6">Homotetramer and heterotetramer. At least six or seven isozymes are produced from a mixture of 3 gene products. Interacts with NCA1 (PubMed:25700484). Interacts with LSD1 (PubMed:23958864).</text>
</comment>
<comment type="subcellular location">
    <subcellularLocation>
        <location evidence="7">Cytoplasm</location>
    </subcellularLocation>
</comment>
<comment type="induction">
    <text evidence="3 4">By hydrogen peroxide. By abscisic acid (ABA), drought, and salt stress through the MKK1-MPK6 mediation.</text>
</comment>
<comment type="similarity">
    <text evidence="7">Belongs to the catalase family.</text>
</comment>
<comment type="sequence caution" evidence="7">
    <conflict type="erroneous gene model prediction">
        <sequence resource="EMBL-CDS" id="AAF79625"/>
    </conflict>
</comment>
<comment type="sequence caution" evidence="7">
    <conflict type="erroneous gene model prediction">
        <sequence resource="EMBL-CDS" id="AAF80611"/>
    </conflict>
</comment>
<feature type="chain" id="PRO_0000084930" description="Catalase-1">
    <location>
        <begin position="1"/>
        <end position="492"/>
    </location>
</feature>
<feature type="active site" evidence="2">
    <location>
        <position position="65"/>
    </location>
</feature>
<feature type="active site" evidence="2">
    <location>
        <position position="138"/>
    </location>
</feature>
<feature type="binding site" description="axial binding residue" evidence="1">
    <location>
        <position position="348"/>
    </location>
    <ligand>
        <name>heme</name>
        <dbReference type="ChEBI" id="CHEBI:30413"/>
    </ligand>
    <ligandPart>
        <name>Fe</name>
        <dbReference type="ChEBI" id="CHEBI:18248"/>
    </ligandPart>
</feature>
<feature type="sequence conflict" description="In Ref. 1; AAB07026." evidence="7" ref="1">
    <original>F</original>
    <variation>L</variation>
    <location>
        <position position="103"/>
    </location>
</feature>
<feature type="sequence conflict" description="In Ref. 1; AAB07026." evidence="7" ref="1">
    <original>G</original>
    <variation>F</variation>
    <location>
        <position position="332"/>
    </location>
</feature>
<feature type="sequence conflict" description="In Ref. 1; AAB07026." evidence="7" ref="1">
    <original>KL</original>
    <variation>NV</variation>
    <location>
        <begin position="339"/>
        <end position="340"/>
    </location>
</feature>
<feature type="sequence conflict" description="In Ref. 1; AAB07026 and 2; AAC17731." evidence="7" ref="1 2">
    <original>G</original>
    <variation>R</variation>
    <location>
        <position position="423"/>
    </location>
</feature>
<accession>Q96528</accession>
<accession>O22529</accession>
<accession>Q9LDS9</accession>
<reference key="1">
    <citation type="journal article" date="1996" name="Plant Physiol.">
        <title>Catalase is encoded by a multigene family in Arabidopsis thaliana (L.) Heynh.</title>
        <authorList>
            <person name="Frugoli J.A."/>
            <person name="Zhong H.H."/>
            <person name="Nuccio M.L."/>
            <person name="McCourt P."/>
            <person name="McPeek M.A."/>
            <person name="Thomas T.L."/>
            <person name="McClung C.R."/>
        </authorList>
    </citation>
    <scope>NUCLEOTIDE SEQUENCE [MRNA]</scope>
    <source>
        <strain>cv. Landsberg erecta</strain>
    </source>
</reference>
<reference key="2">
    <citation type="journal article" date="1998" name="Genetics">
        <title>Intron loss and gain during evolution of the catalase gene family in angiosperms.</title>
        <authorList>
            <person name="Frugoli J.A."/>
            <person name="McPeek M.A."/>
            <person name="Thomas T.L."/>
            <person name="McClung C.R."/>
        </authorList>
    </citation>
    <scope>NUCLEOTIDE SEQUENCE [GENOMIC DNA]</scope>
    <source>
        <strain>cv. Columbia</strain>
    </source>
</reference>
<reference key="3">
    <citation type="journal article" date="2000" name="Nature">
        <title>Sequence and analysis of chromosome 1 of the plant Arabidopsis thaliana.</title>
        <authorList>
            <person name="Theologis A."/>
            <person name="Ecker J.R."/>
            <person name="Palm C.J."/>
            <person name="Federspiel N.A."/>
            <person name="Kaul S."/>
            <person name="White O."/>
            <person name="Alonso J."/>
            <person name="Altafi H."/>
            <person name="Araujo R."/>
            <person name="Bowman C.L."/>
            <person name="Brooks S.Y."/>
            <person name="Buehler E."/>
            <person name="Chan A."/>
            <person name="Chao Q."/>
            <person name="Chen H."/>
            <person name="Cheuk R.F."/>
            <person name="Chin C.W."/>
            <person name="Chung M.K."/>
            <person name="Conn L."/>
            <person name="Conway A.B."/>
            <person name="Conway A.R."/>
            <person name="Creasy T.H."/>
            <person name="Dewar K."/>
            <person name="Dunn P."/>
            <person name="Etgu P."/>
            <person name="Feldblyum T.V."/>
            <person name="Feng J.-D."/>
            <person name="Fong B."/>
            <person name="Fujii C.Y."/>
            <person name="Gill J.E."/>
            <person name="Goldsmith A.D."/>
            <person name="Haas B."/>
            <person name="Hansen N.F."/>
            <person name="Hughes B."/>
            <person name="Huizar L."/>
            <person name="Hunter J.L."/>
            <person name="Jenkins J."/>
            <person name="Johnson-Hopson C."/>
            <person name="Khan S."/>
            <person name="Khaykin E."/>
            <person name="Kim C.J."/>
            <person name="Koo H.L."/>
            <person name="Kremenetskaia I."/>
            <person name="Kurtz D.B."/>
            <person name="Kwan A."/>
            <person name="Lam B."/>
            <person name="Langin-Hooper S."/>
            <person name="Lee A."/>
            <person name="Lee J.M."/>
            <person name="Lenz C.A."/>
            <person name="Li J.H."/>
            <person name="Li Y.-P."/>
            <person name="Lin X."/>
            <person name="Liu S.X."/>
            <person name="Liu Z.A."/>
            <person name="Luros J.S."/>
            <person name="Maiti R."/>
            <person name="Marziali A."/>
            <person name="Militscher J."/>
            <person name="Miranda M."/>
            <person name="Nguyen M."/>
            <person name="Nierman W.C."/>
            <person name="Osborne B.I."/>
            <person name="Pai G."/>
            <person name="Peterson J."/>
            <person name="Pham P.K."/>
            <person name="Rizzo M."/>
            <person name="Rooney T."/>
            <person name="Rowley D."/>
            <person name="Sakano H."/>
            <person name="Salzberg S.L."/>
            <person name="Schwartz J.R."/>
            <person name="Shinn P."/>
            <person name="Southwick A.M."/>
            <person name="Sun H."/>
            <person name="Tallon L.J."/>
            <person name="Tambunga G."/>
            <person name="Toriumi M.J."/>
            <person name="Town C.D."/>
            <person name="Utterback T."/>
            <person name="Van Aken S."/>
            <person name="Vaysberg M."/>
            <person name="Vysotskaia V.S."/>
            <person name="Walker M."/>
            <person name="Wu D."/>
            <person name="Yu G."/>
            <person name="Fraser C.M."/>
            <person name="Venter J.C."/>
            <person name="Davis R.W."/>
        </authorList>
    </citation>
    <scope>NUCLEOTIDE SEQUENCE [LARGE SCALE GENOMIC DNA]</scope>
    <source>
        <strain>cv. Columbia</strain>
    </source>
</reference>
<reference key="4">
    <citation type="journal article" date="2017" name="Plant J.">
        <title>Araport11: a complete reannotation of the Arabidopsis thaliana reference genome.</title>
        <authorList>
            <person name="Cheng C.Y."/>
            <person name="Krishnakumar V."/>
            <person name="Chan A.P."/>
            <person name="Thibaud-Nissen F."/>
            <person name="Schobel S."/>
            <person name="Town C.D."/>
        </authorList>
    </citation>
    <scope>GENOME REANNOTATION</scope>
    <source>
        <strain>cv. Columbia</strain>
    </source>
</reference>
<reference key="5">
    <citation type="journal article" date="2003" name="Science">
        <title>Empirical analysis of transcriptional activity in the Arabidopsis genome.</title>
        <authorList>
            <person name="Yamada K."/>
            <person name="Lim J."/>
            <person name="Dale J.M."/>
            <person name="Chen H."/>
            <person name="Shinn P."/>
            <person name="Palm C.J."/>
            <person name="Southwick A.M."/>
            <person name="Wu H.C."/>
            <person name="Kim C.J."/>
            <person name="Nguyen M."/>
            <person name="Pham P.K."/>
            <person name="Cheuk R.F."/>
            <person name="Karlin-Newmann G."/>
            <person name="Liu S.X."/>
            <person name="Lam B."/>
            <person name="Sakano H."/>
            <person name="Wu T."/>
            <person name="Yu G."/>
            <person name="Miranda M."/>
            <person name="Quach H.L."/>
            <person name="Tripp M."/>
            <person name="Chang C.H."/>
            <person name="Lee J.M."/>
            <person name="Toriumi M.J."/>
            <person name="Chan M.M."/>
            <person name="Tang C.C."/>
            <person name="Onodera C.S."/>
            <person name="Deng J.M."/>
            <person name="Akiyama K."/>
            <person name="Ansari Y."/>
            <person name="Arakawa T."/>
            <person name="Banh J."/>
            <person name="Banno F."/>
            <person name="Bowser L."/>
            <person name="Brooks S.Y."/>
            <person name="Carninci P."/>
            <person name="Chao Q."/>
            <person name="Choy N."/>
            <person name="Enju A."/>
            <person name="Goldsmith A.D."/>
            <person name="Gurjal M."/>
            <person name="Hansen N.F."/>
            <person name="Hayashizaki Y."/>
            <person name="Johnson-Hopson C."/>
            <person name="Hsuan V.W."/>
            <person name="Iida K."/>
            <person name="Karnes M."/>
            <person name="Khan S."/>
            <person name="Koesema E."/>
            <person name="Ishida J."/>
            <person name="Jiang P.X."/>
            <person name="Jones T."/>
            <person name="Kawai J."/>
            <person name="Kamiya A."/>
            <person name="Meyers C."/>
            <person name="Nakajima M."/>
            <person name="Narusaka M."/>
            <person name="Seki M."/>
            <person name="Sakurai T."/>
            <person name="Satou M."/>
            <person name="Tamse R."/>
            <person name="Vaysberg M."/>
            <person name="Wallender E.K."/>
            <person name="Wong C."/>
            <person name="Yamamura Y."/>
            <person name="Yuan S."/>
            <person name="Shinozaki K."/>
            <person name="Davis R.W."/>
            <person name="Theologis A."/>
            <person name="Ecker J.R."/>
        </authorList>
    </citation>
    <scope>NUCLEOTIDE SEQUENCE [LARGE SCALE MRNA]</scope>
    <source>
        <strain>cv. Columbia</strain>
    </source>
</reference>
<reference key="6">
    <citation type="journal article" date="2007" name="J. Exp. Bot.">
        <title>AtMEK1 mediates stress-induced gene expression of CAT1 catalase by triggering H2O2 production in Arabidopsis.</title>
        <authorList>
            <person name="Xing Y."/>
            <person name="Jia W."/>
            <person name="Zhang J."/>
        </authorList>
    </citation>
    <scope>INDUCTION</scope>
</reference>
<reference key="7">
    <citation type="journal article" date="2008" name="Plant J.">
        <title>AtMKK1 mediates ABA-induced CAT1 expression and H2O2 production via AtMPK6-coupled signaling in Arabidopsis.</title>
        <authorList>
            <person name="Xing Y."/>
            <person name="Jia W."/>
            <person name="Zhang J."/>
        </authorList>
    </citation>
    <scope>INDUCTION</scope>
</reference>
<reference key="8">
    <citation type="journal article" date="2013" name="Plant Physiol.">
        <title>LESION SIMULATING DISEASE1 interacts with catalases to regulate hypersensitive cell death in Arabidopsis.</title>
        <authorList>
            <person name="Li Y."/>
            <person name="Chen L."/>
            <person name="Mu J."/>
            <person name="Zuo J."/>
        </authorList>
    </citation>
    <scope>INTERACTION WITH LSD1</scope>
</reference>
<reference key="9">
    <citation type="journal article" date="2015" name="Plant Cell">
        <title>A chaperone function of NO CATALASE ACTIVITY1 is required to maintain catalase activity and for multiple stress responses in Arabidopsis.</title>
        <authorList>
            <person name="Li J."/>
            <person name="Liu J."/>
            <person name="Wang G."/>
            <person name="Cha J.Y."/>
            <person name="Li G."/>
            <person name="Chen S."/>
            <person name="Li Z."/>
            <person name="Guo J."/>
            <person name="Zhang C."/>
            <person name="Yang Y."/>
            <person name="Kim W.Y."/>
            <person name="Yun D.J."/>
            <person name="Schumaker K.S."/>
            <person name="Chen Z."/>
            <person name="Guo Y."/>
        </authorList>
    </citation>
    <scope>INTERACTION WITH NCA1</scope>
</reference>
<evidence type="ECO:0000250" key="1"/>
<evidence type="ECO:0000255" key="2">
    <source>
        <dbReference type="PROSITE-ProRule" id="PRU10013"/>
    </source>
</evidence>
<evidence type="ECO:0000269" key="3">
    <source>
    </source>
</evidence>
<evidence type="ECO:0000269" key="4">
    <source>
    </source>
</evidence>
<evidence type="ECO:0000269" key="5">
    <source>
    </source>
</evidence>
<evidence type="ECO:0000269" key="6">
    <source>
    </source>
</evidence>
<evidence type="ECO:0000305" key="7"/>
<sequence length="492" mass="56762">MDPYRVRPSSAHDSPFFTTNSGAPVWNNNSSLTVGTRGPILLEDYHLLEKLANFDRERIPERVVHARGASAKGFFEVTHDITQLTSADFLRGPGVQTPVIVRFSTVIHERGSPETLRDPRGFAVKFYTREGNFDLVGNNFPVFFVRDGMKFPDMVHALKPNPKSHIQENWRILDFFSHHPESLHMFSFLFDDLGIPQDYRHMEGAGVNTYMLINKAGKAHYVKFHWKPTCGIKCLSDEEAIRVGGANHSHATKDLYDSIAAGNYPQWNLFVQVMDPAHEDKFDFDPLDVTKIWPEDILPLQPVGRLVLNKNIDNFFNENEQIAFCPALVVPGIHYSDDKLLQTRIFSYADSQRHRLGPNYLQLPVNAPKCAHHNNHHDGFMNFMHRDEEVNYFPSRLDPVRHAEKYPTTPIVCSGNREKCFIGKENNFKQPGERYRSWDSDRQERFVKRFVEALSEPRVTHEIRSIWISYWSQADKSLGQKLATRLNVRPNF</sequence>
<keyword id="KW-0963">Cytoplasm</keyword>
<keyword id="KW-0349">Heme</keyword>
<keyword id="KW-0376">Hydrogen peroxide</keyword>
<keyword id="KW-0408">Iron</keyword>
<keyword id="KW-0479">Metal-binding</keyword>
<keyword id="KW-0560">Oxidoreductase</keyword>
<keyword id="KW-0575">Peroxidase</keyword>
<keyword id="KW-1185">Reference proteome</keyword>
<organism>
    <name type="scientific">Arabidopsis thaliana</name>
    <name type="common">Mouse-ear cress</name>
    <dbReference type="NCBI Taxonomy" id="3702"/>
    <lineage>
        <taxon>Eukaryota</taxon>
        <taxon>Viridiplantae</taxon>
        <taxon>Streptophyta</taxon>
        <taxon>Embryophyta</taxon>
        <taxon>Tracheophyta</taxon>
        <taxon>Spermatophyta</taxon>
        <taxon>Magnoliopsida</taxon>
        <taxon>eudicotyledons</taxon>
        <taxon>Gunneridae</taxon>
        <taxon>Pentapetalae</taxon>
        <taxon>rosids</taxon>
        <taxon>malvids</taxon>
        <taxon>Brassicales</taxon>
        <taxon>Brassicaceae</taxon>
        <taxon>Camelineae</taxon>
        <taxon>Arabidopsis</taxon>
    </lineage>
</organism>